<reference key="1">
    <citation type="journal article" date="1985" name="Virology">
        <title>Molecular cloning of Lassa virus RNA: nucleotide sequence and expression of the nucleocapsid protein gene.</title>
        <authorList>
            <person name="Clegg J.C.S."/>
            <person name="Oram J.D."/>
        </authorList>
    </citation>
    <scope>NUCLEOTIDE SEQUENCE [GENOMIC RNA]</scope>
</reference>
<reference key="2">
    <citation type="journal article" date="1991" name="Virus Res.">
        <title>Nucleotide sequence of the S RNA of Lassa virus (Nigerian strain) and comparative analysis of arenavirus gene products.</title>
        <authorList>
            <person name="Clegg J.C.S."/>
            <person name="Wilson S.M."/>
            <person name="Oram J.D."/>
        </authorList>
    </citation>
    <scope>NUCLEOTIDE SEQUENCE [GENOMIC RNA]</scope>
</reference>
<protein>
    <recommendedName>
        <fullName evidence="1">Nucleoprotein</fullName>
        <ecNumber evidence="1">3.1.13.-</ecNumber>
    </recommendedName>
    <alternativeName>
        <fullName evidence="1">Nucleocapsid protein</fullName>
    </alternativeName>
    <alternativeName>
        <fullName evidence="1">Protein N</fullName>
    </alternativeName>
</protein>
<organismHost>
    <name type="scientific">Homo sapiens</name>
    <name type="common">Human</name>
    <dbReference type="NCBI Taxonomy" id="9606"/>
</organismHost>
<organismHost>
    <name type="scientific">Mastomys natalensis</name>
    <name type="common">African soft-furred rat</name>
    <name type="synonym">Praomys natalensis</name>
    <dbReference type="NCBI Taxonomy" id="10112"/>
</organismHost>
<keyword id="KW-0167">Capsid protein</keyword>
<keyword id="KW-1139">Helical capsid protein</keyword>
<keyword id="KW-1035">Host cytoplasm</keyword>
<keyword id="KW-0945">Host-virus interaction</keyword>
<keyword id="KW-0378">Hydrolase</keyword>
<keyword id="KW-1224">Inhibition of host IKBKE by virus</keyword>
<keyword id="KW-1090">Inhibition of host innate immune response by virus</keyword>
<keyword id="KW-1113">Inhibition of host RLR pathway by virus</keyword>
<keyword id="KW-0922">Interferon antiviral system evasion</keyword>
<keyword id="KW-0464">Manganese</keyword>
<keyword id="KW-0479">Metal-binding</keyword>
<keyword id="KW-0687">Ribonucleoprotein</keyword>
<keyword id="KW-0694">RNA-binding</keyword>
<keyword id="KW-0899">Viral immunoevasion</keyword>
<keyword id="KW-0543">Viral nucleoprotein</keyword>
<keyword id="KW-0946">Virion</keyword>
<keyword id="KW-0862">Zinc</keyword>
<evidence type="ECO:0000255" key="1">
    <source>
        <dbReference type="HAMAP-Rule" id="MF_04085"/>
    </source>
</evidence>
<accession>P04935</accession>
<name>NCAP_LASSG</name>
<proteinExistence type="inferred from homology"/>
<comment type="function">
    <text evidence="1">Encapsidates the genome, protecting it from nucleases. The encapsidated genomic RNA is termed the nucleocapsid (NC). Serves as template for viral transcription and replication. The increased presence of protein N in host cell does not seem to trigger the switch from transcription to replication as observed in other negative strain RNA viruses. Through the interaction with host IKBKE, strongly inhibits the phosphorylation and nuclear translocation of host IRF3, a protein involved in interferon activation pathway, leading to the inhibition of interferon-beta and IRF3-dependent promoters activation. Also encodes a functional 3'-5' exoribonuclease that degrades preferentially dsRNA substrates and thereby participates in the suppression of interferon induction.</text>
</comment>
<comment type="subunit">
    <text evidence="1">Homomultimerizes to form the nucleocapsid. Binds to viral genomic RNA. Interacts with glycoprotein G2. Interacts with protein Z; this interaction probably directs the encapsidated genome to budding sites. Interacts with protein L; this interaction does not interfere with Z-L interaction. Interacts with host IKBKE (via Protein kinase domain); the interaction inhibits IKBKE kinase activity.</text>
</comment>
<comment type="subcellular location">
    <subcellularLocation>
        <location evidence="1">Virion</location>
    </subcellularLocation>
    <subcellularLocation>
        <location evidence="1">Host cytoplasm</location>
    </subcellularLocation>
</comment>
<comment type="domain">
    <text evidence="1">The N-terminal region is important for the cap-binding activity while the C-terminal region contains the 3'-5' exoribonuclease activity. A CCHE zinc binding site is present in the C-terminal region and may thus contribute to the substrate binding and/or the specificity of the exonuclease activity.</text>
</comment>
<comment type="similarity">
    <text evidence="1">Belongs to the arenaviridae nucleocapsid protein family.</text>
</comment>
<sequence>MSASKEVRSCLWTQSLRRELSGYCSNIKLQVVKDAQALLHGLDFSEVSNVQRLMRKQKRDDGDLKRLRDLNQAVNNLVELKSTQQKSVLRVGTLSSDDLLILAADLEKLKSKVTRTERPLSSGVYMGNLSSQQLDQRRALLNMIGMTGVSGGGKGASNGIVRVWDVKNAELLNNQFGTMPSLTLACLTKQGQVDLNDAVQALTDLGLIYTAKYPNSSDLDRLSQSHPILNMIDTKKSSLNISGYNFSLGAAVKAGACMLDGGNMLETIKVSPQTMDGILKSILKVKKSLGMFVSDTPGERNPYENILYKICLSGDGWSYIASRTSIVGRAWENTVVDLEQDNKPQKIGNGGSNKSLQSAGFAAGLIYSQLMTLKDFKCFNLIPNAKTWMDIEGRPEDPVEIALYQPSSGCYVHFFREPTDLKQFKQDAKYSHGRDVTDLFAAQPGLTSAVIEALPRNMVITCQGSEDIRKLLESQGRRDIKLIDITLSKADSRKFENAVWDQFKDLCHMHTGVVVEKKKRGGKEEITPHCALMDCIMFDAAVSGGLDAKVLRVVLPRDMVFRTSTPKVVL</sequence>
<dbReference type="EC" id="3.1.13.-" evidence="1"/>
<dbReference type="EMBL" id="X52400">
    <property type="protein sequence ID" value="CAA36646.1"/>
    <property type="status" value="ALT_SEQ"/>
    <property type="molecule type" value="Genomic_RNA"/>
</dbReference>
<dbReference type="EMBL" id="K03362">
    <property type="protein sequence ID" value="AAA46284.1"/>
    <property type="molecule type" value="Genomic_RNA"/>
</dbReference>
<dbReference type="PIR" id="B43492">
    <property type="entry name" value="VHXPL2"/>
</dbReference>
<dbReference type="SMR" id="P04935"/>
<dbReference type="GO" id="GO:0019029">
    <property type="term" value="C:helical viral capsid"/>
    <property type="evidence" value="ECO:0007669"/>
    <property type="project" value="UniProtKB-UniRule"/>
</dbReference>
<dbReference type="GO" id="GO:0030430">
    <property type="term" value="C:host cell cytoplasm"/>
    <property type="evidence" value="ECO:0007669"/>
    <property type="project" value="UniProtKB-SubCell"/>
</dbReference>
<dbReference type="GO" id="GO:1990904">
    <property type="term" value="C:ribonucleoprotein complex"/>
    <property type="evidence" value="ECO:0007669"/>
    <property type="project" value="UniProtKB-KW"/>
</dbReference>
<dbReference type="GO" id="GO:0019013">
    <property type="term" value="C:viral nucleocapsid"/>
    <property type="evidence" value="ECO:0007669"/>
    <property type="project" value="UniProtKB-UniRule"/>
</dbReference>
<dbReference type="GO" id="GO:0016787">
    <property type="term" value="F:hydrolase activity"/>
    <property type="evidence" value="ECO:0007669"/>
    <property type="project" value="UniProtKB-KW"/>
</dbReference>
<dbReference type="GO" id="GO:0046872">
    <property type="term" value="F:metal ion binding"/>
    <property type="evidence" value="ECO:0007669"/>
    <property type="project" value="UniProtKB-UniRule"/>
</dbReference>
<dbReference type="GO" id="GO:0003723">
    <property type="term" value="F:RNA binding"/>
    <property type="evidence" value="ECO:0007669"/>
    <property type="project" value="UniProtKB-UniRule"/>
</dbReference>
<dbReference type="GO" id="GO:0039689">
    <property type="term" value="P:negative stranded viral RNA replication"/>
    <property type="evidence" value="ECO:0000250"/>
    <property type="project" value="UniProtKB"/>
</dbReference>
<dbReference type="GO" id="GO:0039696">
    <property type="term" value="P:RNA-templated viral transcription"/>
    <property type="evidence" value="ECO:0000250"/>
    <property type="project" value="UniProtKB"/>
</dbReference>
<dbReference type="GO" id="GO:0039724">
    <property type="term" value="P:symbiont-mediated suppression of host cytoplasmic pattern recognition receptor signaling pathway via inhibition of IKBKE activity"/>
    <property type="evidence" value="ECO:0007669"/>
    <property type="project" value="UniProtKB-UniRule"/>
</dbReference>
<dbReference type="FunFam" id="1.10.150.550:FF:000001">
    <property type="entry name" value="Nucleoprotein"/>
    <property type="match status" value="1"/>
</dbReference>
<dbReference type="FunFam" id="1.10.150.550:FF:000002">
    <property type="entry name" value="Nucleoprotein"/>
    <property type="match status" value="1"/>
</dbReference>
<dbReference type="FunFam" id="3.30.420.410:FF:000001">
    <property type="entry name" value="Nucleoprotein"/>
    <property type="match status" value="1"/>
</dbReference>
<dbReference type="Gene3D" id="6.10.250.1200">
    <property type="match status" value="1"/>
</dbReference>
<dbReference type="Gene3D" id="3.30.420.410">
    <property type="entry name" value="Arenaviral nucleoprotein, C-terminal domain"/>
    <property type="match status" value="1"/>
</dbReference>
<dbReference type="Gene3D" id="1.10.150.550">
    <property type="entry name" value="Arenavirus nucleocapsid protein, head domain"/>
    <property type="match status" value="2"/>
</dbReference>
<dbReference type="HAMAP" id="MF_04085">
    <property type="entry name" value="ARENA_NCAP"/>
    <property type="match status" value="1"/>
</dbReference>
<dbReference type="InterPro" id="IPR000229">
    <property type="entry name" value="Nucleocapsid_arenaviridae"/>
</dbReference>
<dbReference type="InterPro" id="IPR035084">
    <property type="entry name" value="Nucleocapsid_C_arenaviridae"/>
</dbReference>
<dbReference type="InterPro" id="IPR038115">
    <property type="entry name" value="Nucleocapsid_C_sf"/>
</dbReference>
<dbReference type="InterPro" id="IPR035083">
    <property type="entry name" value="Nucleocapsid_N_arenaviridae"/>
</dbReference>
<dbReference type="Pfam" id="PF17290">
    <property type="entry name" value="Arena_ncap_C"/>
    <property type="match status" value="1"/>
</dbReference>
<dbReference type="Pfam" id="PF00843">
    <property type="entry name" value="Arena_nucleocap"/>
    <property type="match status" value="1"/>
</dbReference>
<dbReference type="PIRSF" id="PIRSF004029">
    <property type="entry name" value="N_ArenaV"/>
    <property type="match status" value="1"/>
</dbReference>
<organism>
    <name type="scientific">Lassa virus (strain GA391)</name>
    <name type="common">LASV</name>
    <dbReference type="NCBI Taxonomy" id="11621"/>
    <lineage>
        <taxon>Viruses</taxon>
        <taxon>Riboviria</taxon>
        <taxon>Orthornavirae</taxon>
        <taxon>Negarnaviricota</taxon>
        <taxon>Polyploviricotina</taxon>
        <taxon>Ellioviricetes</taxon>
        <taxon>Bunyavirales</taxon>
        <taxon>Arenaviridae</taxon>
        <taxon>Mammarenavirus</taxon>
        <taxon>Mammarenavirus lassaense</taxon>
    </lineage>
</organism>
<gene>
    <name evidence="1" type="primary">N</name>
</gene>
<feature type="chain" id="PRO_0000079191" description="Nucleoprotein">
    <location>
        <begin position="1"/>
        <end position="570"/>
    </location>
</feature>
<feature type="region of interest" description="Binding site for the cap structure m7GTP" evidence="1">
    <location>
        <begin position="54"/>
        <end position="241"/>
    </location>
</feature>
<feature type="binding site" evidence="1">
    <location>
        <position position="390"/>
    </location>
    <ligand>
        <name>Mn(2+)</name>
        <dbReference type="ChEBI" id="CHEBI:29035"/>
    </ligand>
</feature>
<feature type="binding site" evidence="1">
    <location>
        <position position="392"/>
    </location>
    <ligand>
        <name>Mn(2+)</name>
        <dbReference type="ChEBI" id="CHEBI:29035"/>
    </ligand>
</feature>
<feature type="binding site" evidence="1">
    <location>
        <position position="400"/>
    </location>
    <ligand>
        <name>Zn(2+)</name>
        <dbReference type="ChEBI" id="CHEBI:29105"/>
    </ligand>
</feature>
<feature type="binding site" evidence="1">
    <location>
        <position position="507"/>
    </location>
    <ligand>
        <name>Zn(2+)</name>
        <dbReference type="ChEBI" id="CHEBI:29105"/>
    </ligand>
</feature>
<feature type="binding site" evidence="1">
    <location>
        <position position="510"/>
    </location>
    <ligand>
        <name>Zn(2+)</name>
        <dbReference type="ChEBI" id="CHEBI:29105"/>
    </ligand>
</feature>
<feature type="binding site" evidence="1">
    <location>
        <position position="530"/>
    </location>
    <ligand>
        <name>Zn(2+)</name>
        <dbReference type="ChEBI" id="CHEBI:29105"/>
    </ligand>
</feature>
<feature type="binding site" evidence="1">
    <location>
        <position position="534"/>
    </location>
    <ligand>
        <name>Mn(2+)</name>
        <dbReference type="ChEBI" id="CHEBI:29035"/>
    </ligand>
</feature>
<feature type="site" description="Important for exonuclease activity" evidence="1">
    <location>
        <position position="467"/>
    </location>
</feature>